<feature type="chain" id="PRO_1000003566" description="Small ribosomal subunit protein bS18">
    <location>
        <begin position="1"/>
        <end position="76"/>
    </location>
</feature>
<organism>
    <name type="scientific">Pseudomonas paraeruginosa (strain DSM 24068 / PA7)</name>
    <name type="common">Pseudomonas aeruginosa (strain PA7)</name>
    <dbReference type="NCBI Taxonomy" id="381754"/>
    <lineage>
        <taxon>Bacteria</taxon>
        <taxon>Pseudomonadati</taxon>
        <taxon>Pseudomonadota</taxon>
        <taxon>Gammaproteobacteria</taxon>
        <taxon>Pseudomonadales</taxon>
        <taxon>Pseudomonadaceae</taxon>
        <taxon>Pseudomonas</taxon>
        <taxon>Pseudomonas paraeruginosa</taxon>
    </lineage>
</organism>
<comment type="function">
    <text evidence="1">Binds as a heterodimer with protein bS6 to the central domain of the 16S rRNA, where it helps stabilize the platform of the 30S subunit.</text>
</comment>
<comment type="subunit">
    <text evidence="1">Part of the 30S ribosomal subunit. Forms a tight heterodimer with protein bS6.</text>
</comment>
<comment type="similarity">
    <text evidence="1">Belongs to the bacterial ribosomal protein bS18 family.</text>
</comment>
<accession>A6VD47</accession>
<reference key="1">
    <citation type="submission" date="2007-06" db="EMBL/GenBank/DDBJ databases">
        <authorList>
            <person name="Dodson R.J."/>
            <person name="Harkins D."/>
            <person name="Paulsen I.T."/>
        </authorList>
    </citation>
    <scope>NUCLEOTIDE SEQUENCE [LARGE SCALE GENOMIC DNA]</scope>
    <source>
        <strain>DSM 24068 / PA7</strain>
    </source>
</reference>
<keyword id="KW-0687">Ribonucleoprotein</keyword>
<keyword id="KW-0689">Ribosomal protein</keyword>
<keyword id="KW-0694">RNA-binding</keyword>
<keyword id="KW-0699">rRNA-binding</keyword>
<proteinExistence type="inferred from homology"/>
<dbReference type="EMBL" id="CP000744">
    <property type="protein sequence ID" value="ABR85975.1"/>
    <property type="molecule type" value="Genomic_DNA"/>
</dbReference>
<dbReference type="RefSeq" id="WP_003095634.1">
    <property type="nucleotide sequence ID" value="NC_009656.1"/>
</dbReference>
<dbReference type="SMR" id="A6VD47"/>
<dbReference type="GeneID" id="79910526"/>
<dbReference type="KEGG" id="pap:PSPA7_5661"/>
<dbReference type="HOGENOM" id="CLU_148710_2_3_6"/>
<dbReference type="Proteomes" id="UP000001582">
    <property type="component" value="Chromosome"/>
</dbReference>
<dbReference type="GO" id="GO:0022627">
    <property type="term" value="C:cytosolic small ribosomal subunit"/>
    <property type="evidence" value="ECO:0007669"/>
    <property type="project" value="TreeGrafter"/>
</dbReference>
<dbReference type="GO" id="GO:0070181">
    <property type="term" value="F:small ribosomal subunit rRNA binding"/>
    <property type="evidence" value="ECO:0007669"/>
    <property type="project" value="TreeGrafter"/>
</dbReference>
<dbReference type="GO" id="GO:0003735">
    <property type="term" value="F:structural constituent of ribosome"/>
    <property type="evidence" value="ECO:0007669"/>
    <property type="project" value="InterPro"/>
</dbReference>
<dbReference type="GO" id="GO:0006412">
    <property type="term" value="P:translation"/>
    <property type="evidence" value="ECO:0007669"/>
    <property type="project" value="UniProtKB-UniRule"/>
</dbReference>
<dbReference type="FunFam" id="4.10.640.10:FF:000001">
    <property type="entry name" value="30S ribosomal protein S18"/>
    <property type="match status" value="1"/>
</dbReference>
<dbReference type="Gene3D" id="4.10.640.10">
    <property type="entry name" value="Ribosomal protein S18"/>
    <property type="match status" value="1"/>
</dbReference>
<dbReference type="HAMAP" id="MF_00270">
    <property type="entry name" value="Ribosomal_bS18"/>
    <property type="match status" value="1"/>
</dbReference>
<dbReference type="InterPro" id="IPR001648">
    <property type="entry name" value="Ribosomal_bS18"/>
</dbReference>
<dbReference type="InterPro" id="IPR018275">
    <property type="entry name" value="Ribosomal_bS18_CS"/>
</dbReference>
<dbReference type="InterPro" id="IPR036870">
    <property type="entry name" value="Ribosomal_bS18_sf"/>
</dbReference>
<dbReference type="NCBIfam" id="TIGR00165">
    <property type="entry name" value="S18"/>
    <property type="match status" value="1"/>
</dbReference>
<dbReference type="PANTHER" id="PTHR13479">
    <property type="entry name" value="30S RIBOSOMAL PROTEIN S18"/>
    <property type="match status" value="1"/>
</dbReference>
<dbReference type="PANTHER" id="PTHR13479:SF40">
    <property type="entry name" value="SMALL RIBOSOMAL SUBUNIT PROTEIN BS18M"/>
    <property type="match status" value="1"/>
</dbReference>
<dbReference type="Pfam" id="PF01084">
    <property type="entry name" value="Ribosomal_S18"/>
    <property type="match status" value="1"/>
</dbReference>
<dbReference type="PRINTS" id="PR00974">
    <property type="entry name" value="RIBOSOMALS18"/>
</dbReference>
<dbReference type="SUPFAM" id="SSF46911">
    <property type="entry name" value="Ribosomal protein S18"/>
    <property type="match status" value="1"/>
</dbReference>
<dbReference type="PROSITE" id="PS00057">
    <property type="entry name" value="RIBOSOMAL_S18"/>
    <property type="match status" value="1"/>
</dbReference>
<evidence type="ECO:0000255" key="1">
    <source>
        <dbReference type="HAMAP-Rule" id="MF_00270"/>
    </source>
</evidence>
<evidence type="ECO:0000305" key="2"/>
<name>RS18_PSEP7</name>
<gene>
    <name evidence="1" type="primary">rpsR</name>
    <name type="ordered locus">PSPA7_5661</name>
</gene>
<protein>
    <recommendedName>
        <fullName evidence="1">Small ribosomal subunit protein bS18</fullName>
    </recommendedName>
    <alternativeName>
        <fullName evidence="2">30S ribosomal protein S18</fullName>
    </alternativeName>
</protein>
<sequence length="76" mass="8873">MARFFRRRKFCRFTAEGVKEIDYKDLNTLKAYVSETGKIVPSRITGTKAKYQRQLATAIKRARYLALLPYTDSHGR</sequence>